<comment type="function">
    <text evidence="1">ATP-binding RNA helicase involved in ribosome assembly.</text>
</comment>
<comment type="catalytic activity">
    <reaction>
        <text>ATP + H2O = ADP + phosphate + H(+)</text>
        <dbReference type="Rhea" id="RHEA:13065"/>
        <dbReference type="ChEBI" id="CHEBI:15377"/>
        <dbReference type="ChEBI" id="CHEBI:15378"/>
        <dbReference type="ChEBI" id="CHEBI:30616"/>
        <dbReference type="ChEBI" id="CHEBI:43474"/>
        <dbReference type="ChEBI" id="CHEBI:456216"/>
        <dbReference type="EC" id="3.6.4.13"/>
    </reaction>
</comment>
<comment type="subunit">
    <text evidence="1">Associates with pre-ribosomal particles.</text>
</comment>
<comment type="subcellular location">
    <subcellularLocation>
        <location evidence="1">Nucleus</location>
        <location evidence="1">Nucleolus</location>
    </subcellularLocation>
</comment>
<comment type="domain">
    <text>The Q motif is unique to and characteristic of the DEAD box family of RNA helicases and controls ATP binding and hydrolysis.</text>
</comment>
<comment type="similarity">
    <text evidence="5">Belongs to the DEAD box helicase family. DDX27/DRS1 subfamily.</text>
</comment>
<feature type="chain" id="PRO_0000232248" description="ATP-dependent RNA helicase DRS1">
    <location>
        <begin position="1"/>
        <end position="932"/>
    </location>
</feature>
<feature type="domain" description="Helicase ATP-binding" evidence="2">
    <location>
        <begin position="364"/>
        <end position="543"/>
    </location>
</feature>
<feature type="domain" description="Helicase C-terminal" evidence="3">
    <location>
        <begin position="601"/>
        <end position="748"/>
    </location>
</feature>
<feature type="region of interest" description="Disordered" evidence="4">
    <location>
        <begin position="1"/>
        <end position="107"/>
    </location>
</feature>
<feature type="region of interest" description="Disordered" evidence="4">
    <location>
        <begin position="183"/>
        <end position="334"/>
    </location>
</feature>
<feature type="region of interest" description="Disordered" evidence="4">
    <location>
        <begin position="812"/>
        <end position="932"/>
    </location>
</feature>
<feature type="short sequence motif" description="Q motif">
    <location>
        <begin position="333"/>
        <end position="361"/>
    </location>
</feature>
<feature type="short sequence motif" description="DEAD box">
    <location>
        <begin position="490"/>
        <end position="493"/>
    </location>
</feature>
<feature type="compositionally biased region" description="Low complexity" evidence="4">
    <location>
        <begin position="1"/>
        <end position="24"/>
    </location>
</feature>
<feature type="compositionally biased region" description="Basic and acidic residues" evidence="4">
    <location>
        <begin position="56"/>
        <end position="75"/>
    </location>
</feature>
<feature type="compositionally biased region" description="Acidic residues" evidence="4">
    <location>
        <begin position="192"/>
        <end position="210"/>
    </location>
</feature>
<feature type="compositionally biased region" description="Acidic residues" evidence="4">
    <location>
        <begin position="242"/>
        <end position="253"/>
    </location>
</feature>
<feature type="compositionally biased region" description="Acidic residues" evidence="4">
    <location>
        <begin position="262"/>
        <end position="299"/>
    </location>
</feature>
<feature type="compositionally biased region" description="Low complexity" evidence="4">
    <location>
        <begin position="317"/>
        <end position="334"/>
    </location>
</feature>
<feature type="compositionally biased region" description="Basic and acidic residues" evidence="4">
    <location>
        <begin position="847"/>
        <end position="858"/>
    </location>
</feature>
<feature type="compositionally biased region" description="Polar residues" evidence="4">
    <location>
        <begin position="913"/>
        <end position="926"/>
    </location>
</feature>
<feature type="binding site" evidence="2">
    <location>
        <begin position="377"/>
        <end position="384"/>
    </location>
    <ligand>
        <name>ATP</name>
        <dbReference type="ChEBI" id="CHEBI:30616"/>
    </ligand>
</feature>
<accession>Q4P9P3</accession>
<accession>A0A0D1DWP5</accession>
<reference key="1">
    <citation type="journal article" date="2006" name="Nature">
        <title>Insights from the genome of the biotrophic fungal plant pathogen Ustilago maydis.</title>
        <authorList>
            <person name="Kaemper J."/>
            <person name="Kahmann R."/>
            <person name="Boelker M."/>
            <person name="Ma L.-J."/>
            <person name="Brefort T."/>
            <person name="Saville B.J."/>
            <person name="Banuett F."/>
            <person name="Kronstad J.W."/>
            <person name="Gold S.E."/>
            <person name="Mueller O."/>
            <person name="Perlin M.H."/>
            <person name="Woesten H.A.B."/>
            <person name="de Vries R."/>
            <person name="Ruiz-Herrera J."/>
            <person name="Reynaga-Pena C.G."/>
            <person name="Snetselaar K."/>
            <person name="McCann M."/>
            <person name="Perez-Martin J."/>
            <person name="Feldbruegge M."/>
            <person name="Basse C.W."/>
            <person name="Steinberg G."/>
            <person name="Ibeas J.I."/>
            <person name="Holloman W."/>
            <person name="Guzman P."/>
            <person name="Farman M.L."/>
            <person name="Stajich J.E."/>
            <person name="Sentandreu R."/>
            <person name="Gonzalez-Prieto J.M."/>
            <person name="Kennell J.C."/>
            <person name="Molina L."/>
            <person name="Schirawski J."/>
            <person name="Mendoza-Mendoza A."/>
            <person name="Greilinger D."/>
            <person name="Muench K."/>
            <person name="Roessel N."/>
            <person name="Scherer M."/>
            <person name="Vranes M."/>
            <person name="Ladendorf O."/>
            <person name="Vincon V."/>
            <person name="Fuchs U."/>
            <person name="Sandrock B."/>
            <person name="Meng S."/>
            <person name="Ho E.C.H."/>
            <person name="Cahill M.J."/>
            <person name="Boyce K.J."/>
            <person name="Klose J."/>
            <person name="Klosterman S.J."/>
            <person name="Deelstra H.J."/>
            <person name="Ortiz-Castellanos L."/>
            <person name="Li W."/>
            <person name="Sanchez-Alonso P."/>
            <person name="Schreier P.H."/>
            <person name="Haeuser-Hahn I."/>
            <person name="Vaupel M."/>
            <person name="Koopmann E."/>
            <person name="Friedrich G."/>
            <person name="Voss H."/>
            <person name="Schlueter T."/>
            <person name="Margolis J."/>
            <person name="Platt D."/>
            <person name="Swimmer C."/>
            <person name="Gnirke A."/>
            <person name="Chen F."/>
            <person name="Vysotskaia V."/>
            <person name="Mannhaupt G."/>
            <person name="Gueldener U."/>
            <person name="Muensterkoetter M."/>
            <person name="Haase D."/>
            <person name="Oesterheld M."/>
            <person name="Mewes H.-W."/>
            <person name="Mauceli E.W."/>
            <person name="DeCaprio D."/>
            <person name="Wade C.M."/>
            <person name="Butler J."/>
            <person name="Young S.K."/>
            <person name="Jaffe D.B."/>
            <person name="Calvo S.E."/>
            <person name="Nusbaum C."/>
            <person name="Galagan J.E."/>
            <person name="Birren B.W."/>
        </authorList>
    </citation>
    <scope>NUCLEOTIDE SEQUENCE [LARGE SCALE GENOMIC DNA]</scope>
    <source>
        <strain>DSM 14603 / FGSC 9021 / UM521</strain>
    </source>
</reference>
<reference key="2">
    <citation type="submission" date="2014-09" db="EMBL/GenBank/DDBJ databases">
        <authorList>
            <person name="Gueldener U."/>
            <person name="Muensterkoetter M."/>
            <person name="Walter M.C."/>
            <person name="Mannhaupt G."/>
            <person name="Kahmann R."/>
        </authorList>
    </citation>
    <scope>GENOME REANNOTATION</scope>
    <source>
        <strain>DSM 14603 / FGSC 9021 / UM521</strain>
    </source>
</reference>
<evidence type="ECO:0000250" key="1"/>
<evidence type="ECO:0000255" key="2">
    <source>
        <dbReference type="PROSITE-ProRule" id="PRU00541"/>
    </source>
</evidence>
<evidence type="ECO:0000255" key="3">
    <source>
        <dbReference type="PROSITE-ProRule" id="PRU00542"/>
    </source>
</evidence>
<evidence type="ECO:0000256" key="4">
    <source>
        <dbReference type="SAM" id="MobiDB-lite"/>
    </source>
</evidence>
<evidence type="ECO:0000305" key="5"/>
<dbReference type="EC" id="3.6.4.13"/>
<dbReference type="EMBL" id="CM003147">
    <property type="protein sequence ID" value="KIS68599.1"/>
    <property type="molecule type" value="Genomic_DNA"/>
</dbReference>
<dbReference type="RefSeq" id="XP_011389627.1">
    <property type="nucleotide sequence ID" value="XM_011391325.1"/>
</dbReference>
<dbReference type="SMR" id="Q4P9P3"/>
<dbReference type="FunCoup" id="Q4P9P3">
    <property type="interactions" value="414"/>
</dbReference>
<dbReference type="STRING" id="237631.Q4P9P3"/>
<dbReference type="EnsemblFungi" id="KIS68599">
    <property type="protein sequence ID" value="KIS68599"/>
    <property type="gene ID" value="UMAG_03170"/>
</dbReference>
<dbReference type="GeneID" id="23563715"/>
<dbReference type="KEGG" id="uma:UMAG_03170"/>
<dbReference type="VEuPathDB" id="FungiDB:UMAG_03170"/>
<dbReference type="eggNOG" id="KOG0338">
    <property type="taxonomic scope" value="Eukaryota"/>
</dbReference>
<dbReference type="HOGENOM" id="CLU_003041_3_2_1"/>
<dbReference type="InParanoid" id="Q4P9P3"/>
<dbReference type="OMA" id="MIDPPKQ"/>
<dbReference type="OrthoDB" id="10259843at2759"/>
<dbReference type="Proteomes" id="UP000000561">
    <property type="component" value="Chromosome 8"/>
</dbReference>
<dbReference type="GO" id="GO:0005730">
    <property type="term" value="C:nucleolus"/>
    <property type="evidence" value="ECO:0000318"/>
    <property type="project" value="GO_Central"/>
</dbReference>
<dbReference type="GO" id="GO:0030687">
    <property type="term" value="C:preribosome, large subunit precursor"/>
    <property type="evidence" value="ECO:0007669"/>
    <property type="project" value="EnsemblFungi"/>
</dbReference>
<dbReference type="GO" id="GO:0005524">
    <property type="term" value="F:ATP binding"/>
    <property type="evidence" value="ECO:0007669"/>
    <property type="project" value="UniProtKB-KW"/>
</dbReference>
<dbReference type="GO" id="GO:0016887">
    <property type="term" value="F:ATP hydrolysis activity"/>
    <property type="evidence" value="ECO:0007669"/>
    <property type="project" value="RHEA"/>
</dbReference>
<dbReference type="GO" id="GO:0003723">
    <property type="term" value="F:RNA binding"/>
    <property type="evidence" value="ECO:0007669"/>
    <property type="project" value="UniProtKB-KW"/>
</dbReference>
<dbReference type="GO" id="GO:0003724">
    <property type="term" value="F:RNA helicase activity"/>
    <property type="evidence" value="ECO:0007669"/>
    <property type="project" value="UniProtKB-EC"/>
</dbReference>
<dbReference type="GO" id="GO:0000027">
    <property type="term" value="P:ribosomal large subunit assembly"/>
    <property type="evidence" value="ECO:0007669"/>
    <property type="project" value="EnsemblFungi"/>
</dbReference>
<dbReference type="GO" id="GO:0006364">
    <property type="term" value="P:rRNA processing"/>
    <property type="evidence" value="ECO:0007669"/>
    <property type="project" value="EnsemblFungi"/>
</dbReference>
<dbReference type="CDD" id="cd17947">
    <property type="entry name" value="DEADc_DDX27"/>
    <property type="match status" value="1"/>
</dbReference>
<dbReference type="CDD" id="cd18787">
    <property type="entry name" value="SF2_C_DEAD"/>
    <property type="match status" value="1"/>
</dbReference>
<dbReference type="Gene3D" id="3.40.50.300">
    <property type="entry name" value="P-loop containing nucleotide triphosphate hydrolases"/>
    <property type="match status" value="2"/>
</dbReference>
<dbReference type="InterPro" id="IPR011545">
    <property type="entry name" value="DEAD/DEAH_box_helicase_dom"/>
</dbReference>
<dbReference type="InterPro" id="IPR050079">
    <property type="entry name" value="DEAD_box_RNA_helicase"/>
</dbReference>
<dbReference type="InterPro" id="IPR014001">
    <property type="entry name" value="Helicase_ATP-bd"/>
</dbReference>
<dbReference type="InterPro" id="IPR001650">
    <property type="entry name" value="Helicase_C-like"/>
</dbReference>
<dbReference type="InterPro" id="IPR027417">
    <property type="entry name" value="P-loop_NTPase"/>
</dbReference>
<dbReference type="InterPro" id="IPR000629">
    <property type="entry name" value="RNA-helicase_DEAD-box_CS"/>
</dbReference>
<dbReference type="InterPro" id="IPR014014">
    <property type="entry name" value="RNA_helicase_DEAD_Q_motif"/>
</dbReference>
<dbReference type="PANTHER" id="PTHR47959:SF1">
    <property type="entry name" value="ATP-DEPENDENT RNA HELICASE DBPA"/>
    <property type="match status" value="1"/>
</dbReference>
<dbReference type="PANTHER" id="PTHR47959">
    <property type="entry name" value="ATP-DEPENDENT RNA HELICASE RHLE-RELATED"/>
    <property type="match status" value="1"/>
</dbReference>
<dbReference type="Pfam" id="PF00270">
    <property type="entry name" value="DEAD"/>
    <property type="match status" value="1"/>
</dbReference>
<dbReference type="Pfam" id="PF00271">
    <property type="entry name" value="Helicase_C"/>
    <property type="match status" value="1"/>
</dbReference>
<dbReference type="SMART" id="SM00487">
    <property type="entry name" value="DEXDc"/>
    <property type="match status" value="1"/>
</dbReference>
<dbReference type="SMART" id="SM00490">
    <property type="entry name" value="HELICc"/>
    <property type="match status" value="1"/>
</dbReference>
<dbReference type="SUPFAM" id="SSF52540">
    <property type="entry name" value="P-loop containing nucleoside triphosphate hydrolases"/>
    <property type="match status" value="1"/>
</dbReference>
<dbReference type="PROSITE" id="PS00039">
    <property type="entry name" value="DEAD_ATP_HELICASE"/>
    <property type="match status" value="1"/>
</dbReference>
<dbReference type="PROSITE" id="PS51192">
    <property type="entry name" value="HELICASE_ATP_BIND_1"/>
    <property type="match status" value="1"/>
</dbReference>
<dbReference type="PROSITE" id="PS51194">
    <property type="entry name" value="HELICASE_CTER"/>
    <property type="match status" value="1"/>
</dbReference>
<dbReference type="PROSITE" id="PS51195">
    <property type="entry name" value="Q_MOTIF"/>
    <property type="match status" value="1"/>
</dbReference>
<protein>
    <recommendedName>
        <fullName>ATP-dependent RNA helicase DRS1</fullName>
        <ecNumber>3.6.4.13</ecNumber>
    </recommendedName>
</protein>
<sequence length="932" mass="102119">MRVQQSKPSAAAKRKAAATSLTTSPQKKRANTTPKRAKDDDFIMTLDSDDDVEDLDAAHVDADHVASDNSEREPEPEAELEPEHSSTPPDGKLTKNQRKRKEKAHLVGKEKIIESLASRSKTNSAAAVKDAMALDKDFEFDIFGDGSAVDYTGAEANGWDMSVTGTRMHKKLNVDDIIEKRRKVLPTLPAPVEEEEENSDEDDQDDDLDDDIKYAEYQDSDDDEDRFGGGNGNIVGQNKDEDQQDAAELDSQEDPLSSDAESASDDDDDNDNDDDDDELQVAEQDEESNSSEDDSDLETEQEKARKAAFFAEDPIATSADSSSKSKSTNDAESSFGAFDLSRPVLRALSSLSFHKPTPIQSRTIPIALAGKDIVAGAVTGSGKTAAFMIPTIERLTWRAKTRTPHEAKSRVLILAPTRELAIQCYSVGKSIAKFTDIRFCLCVGGLSVKSQEAELKLRPEVVIATPGRLIDHVRNSASFTLDDIEILVMDEADRMLEDGFADELNEIVKSCPKGARQTMLFSATMTDDVEQLVRLSLKRPVRLFVDPKRTTAKKLIQEFVRVRGTGTGGVAGADGLSGIQDQPATWISGGRKSEDAQRPALLLSLCTRTFTSQTMIFVRSKKLAHQLKIVFGLLGLSAGELHGDLSQEQRIDALTDFRDGKTDFLLATDLASRGLDIKGVQTVINYDMPGQFEAYLHRVGRTARAGRNGRAVTLVGEADRRMLKLAIKKSSAEQIKHRIIPSAVAAHMCETLERLKPEVDAVLREEKEEKALRIAEMELKKGENMANHADEIFSRPKRTWFQSGSEKTQASALSKAGYQATMDARSSSKQKDKYAGLSRKKRRSKMMRQEIERERKDASGSAGAKTASGGGMDAGIRAAKKAQRPTKLGVAPLKLANKSKGKQSGRNARPSATGGSKTKSSFNRDFSGNKRR</sequence>
<name>DRS1_MYCMD</name>
<proteinExistence type="inferred from homology"/>
<keyword id="KW-0067">ATP-binding</keyword>
<keyword id="KW-0347">Helicase</keyword>
<keyword id="KW-0378">Hydrolase</keyword>
<keyword id="KW-0547">Nucleotide-binding</keyword>
<keyword id="KW-0539">Nucleus</keyword>
<keyword id="KW-1185">Reference proteome</keyword>
<keyword id="KW-0690">Ribosome biogenesis</keyword>
<keyword id="KW-0694">RNA-binding</keyword>
<gene>
    <name type="primary">DRS1</name>
    <name type="ORF">UMAG_03170</name>
</gene>
<organism>
    <name type="scientific">Mycosarcoma maydis</name>
    <name type="common">Corn smut fungus</name>
    <name type="synonym">Ustilago maydis</name>
    <dbReference type="NCBI Taxonomy" id="5270"/>
    <lineage>
        <taxon>Eukaryota</taxon>
        <taxon>Fungi</taxon>
        <taxon>Dikarya</taxon>
        <taxon>Basidiomycota</taxon>
        <taxon>Ustilaginomycotina</taxon>
        <taxon>Ustilaginomycetes</taxon>
        <taxon>Ustilaginales</taxon>
        <taxon>Ustilaginaceae</taxon>
        <taxon>Mycosarcoma</taxon>
    </lineage>
</organism>